<sequence>MTEADQVRKRINELYKKKQESGLTEAEEAERKELHKQFIANFRAGFKQQLDSLVIVDDQGKDVTPDKAKQIQKKKVLR</sequence>
<gene>
    <name type="ordered locus">Ldb1355</name>
</gene>
<keyword id="KW-0963">Cytoplasm</keyword>
<keyword id="KW-1185">Reference proteome</keyword>
<organism>
    <name type="scientific">Lactobacillus delbrueckii subsp. bulgaricus (strain ATCC 11842 / DSM 20081 / BCRC 10696 / JCM 1002 / NBRC 13953 / NCIMB 11778 / NCTC 12712 / WDCM 00102 / Lb 14)</name>
    <dbReference type="NCBI Taxonomy" id="390333"/>
    <lineage>
        <taxon>Bacteria</taxon>
        <taxon>Bacillati</taxon>
        <taxon>Bacillota</taxon>
        <taxon>Bacilli</taxon>
        <taxon>Lactobacillales</taxon>
        <taxon>Lactobacillaceae</taxon>
        <taxon>Lactobacillus</taxon>
    </lineage>
</organism>
<evidence type="ECO:0000255" key="1">
    <source>
        <dbReference type="HAMAP-Rule" id="MF_01103"/>
    </source>
</evidence>
<reference key="1">
    <citation type="journal article" date="2006" name="Proc. Natl. Acad. Sci. U.S.A.">
        <title>The complete genome sequence of Lactobacillus bulgaricus reveals extensive and ongoing reductive evolution.</title>
        <authorList>
            <person name="van de Guchte M."/>
            <person name="Penaud S."/>
            <person name="Grimaldi C."/>
            <person name="Barbe V."/>
            <person name="Bryson K."/>
            <person name="Nicolas P."/>
            <person name="Robert C."/>
            <person name="Oztas S."/>
            <person name="Mangenot S."/>
            <person name="Couloux A."/>
            <person name="Loux V."/>
            <person name="Dervyn R."/>
            <person name="Bossy R."/>
            <person name="Bolotin A."/>
            <person name="Batto J.-M."/>
            <person name="Walunas T."/>
            <person name="Gibrat J.-F."/>
            <person name="Bessieres P."/>
            <person name="Weissenbach J."/>
            <person name="Ehrlich S.D."/>
            <person name="Maguin E."/>
        </authorList>
    </citation>
    <scope>NUCLEOTIDE SEQUENCE [LARGE SCALE GENOMIC DNA]</scope>
    <source>
        <strain>ATCC 11842 / DSM 20081 / BCRC 10696 / JCM 1002 / NBRC 13953 / NCIMB 11778 / NCTC 12712 / WDCM 00102 / Lb 14</strain>
    </source>
</reference>
<feature type="chain" id="PRO_1000180973" description="UPF0291 protein Ldb1355">
    <location>
        <begin position="1"/>
        <end position="78"/>
    </location>
</feature>
<comment type="subcellular location">
    <subcellularLocation>
        <location evidence="1">Cytoplasm</location>
    </subcellularLocation>
</comment>
<comment type="similarity">
    <text evidence="1">Belongs to the UPF0291 family.</text>
</comment>
<proteinExistence type="inferred from homology"/>
<name>Y1355_LACDA</name>
<protein>
    <recommendedName>
        <fullName evidence="1">UPF0291 protein Ldb1355</fullName>
    </recommendedName>
</protein>
<accession>Q1G9M6</accession>
<dbReference type="EMBL" id="CR954253">
    <property type="protein sequence ID" value="CAI98156.1"/>
    <property type="molecule type" value="Genomic_DNA"/>
</dbReference>
<dbReference type="RefSeq" id="WP_004560787.1">
    <property type="nucleotide sequence ID" value="NZ_JQAV01000006.1"/>
</dbReference>
<dbReference type="SMR" id="Q1G9M6"/>
<dbReference type="STRING" id="390333.Ldb1355"/>
<dbReference type="KEGG" id="ldb:Ldb1355"/>
<dbReference type="PATRIC" id="fig|390333.13.peg.1722"/>
<dbReference type="eggNOG" id="COG4224">
    <property type="taxonomic scope" value="Bacteria"/>
</dbReference>
<dbReference type="HOGENOM" id="CLU_173137_0_1_9"/>
<dbReference type="BioCyc" id="LDEL390333:LDB_RS05810-MONOMER"/>
<dbReference type="Proteomes" id="UP000001259">
    <property type="component" value="Chromosome"/>
</dbReference>
<dbReference type="GO" id="GO:0005737">
    <property type="term" value="C:cytoplasm"/>
    <property type="evidence" value="ECO:0007669"/>
    <property type="project" value="UniProtKB-SubCell"/>
</dbReference>
<dbReference type="Gene3D" id="1.10.287.540">
    <property type="entry name" value="Helix hairpin bin"/>
    <property type="match status" value="1"/>
</dbReference>
<dbReference type="HAMAP" id="MF_01103">
    <property type="entry name" value="UPF0291"/>
    <property type="match status" value="1"/>
</dbReference>
<dbReference type="InterPro" id="IPR009242">
    <property type="entry name" value="DUF896"/>
</dbReference>
<dbReference type="PANTHER" id="PTHR37300">
    <property type="entry name" value="UPF0291 PROTEIN CBO2609/CLC_2481"/>
    <property type="match status" value="1"/>
</dbReference>
<dbReference type="PANTHER" id="PTHR37300:SF1">
    <property type="entry name" value="UPF0291 PROTEIN YNZC"/>
    <property type="match status" value="1"/>
</dbReference>
<dbReference type="Pfam" id="PF05979">
    <property type="entry name" value="DUF896"/>
    <property type="match status" value="1"/>
</dbReference>
<dbReference type="SUPFAM" id="SSF158221">
    <property type="entry name" value="YnzC-like"/>
    <property type="match status" value="1"/>
</dbReference>